<feature type="chain" id="PRO_0000300592" description="Ribosomal RNA large subunit methyltransferase E">
    <location>
        <begin position="1"/>
        <end position="210"/>
    </location>
</feature>
<feature type="active site" description="Proton acceptor" evidence="1">
    <location>
        <position position="162"/>
    </location>
</feature>
<feature type="binding site" evidence="1">
    <location>
        <position position="60"/>
    </location>
    <ligand>
        <name>S-adenosyl-L-methionine</name>
        <dbReference type="ChEBI" id="CHEBI:59789"/>
    </ligand>
</feature>
<feature type="binding site" evidence="1">
    <location>
        <position position="62"/>
    </location>
    <ligand>
        <name>S-adenosyl-L-methionine</name>
        <dbReference type="ChEBI" id="CHEBI:59789"/>
    </ligand>
</feature>
<feature type="binding site" evidence="1">
    <location>
        <position position="80"/>
    </location>
    <ligand>
        <name>S-adenosyl-L-methionine</name>
        <dbReference type="ChEBI" id="CHEBI:59789"/>
    </ligand>
</feature>
<feature type="binding site" evidence="1">
    <location>
        <position position="96"/>
    </location>
    <ligand>
        <name>S-adenosyl-L-methionine</name>
        <dbReference type="ChEBI" id="CHEBI:59789"/>
    </ligand>
</feature>
<feature type="binding site" evidence="1">
    <location>
        <position position="122"/>
    </location>
    <ligand>
        <name>S-adenosyl-L-methionine</name>
        <dbReference type="ChEBI" id="CHEBI:59789"/>
    </ligand>
</feature>
<sequence length="210" mass="23454">MARSKSSGRWLKEHHSDVFVLKAREEGFRSRAVYKLKEIQEKDRIIRPNMTVVELGAAPGGWSQYVAGILNGRGRMIALDILPMDALPDVHFIQGDFREETVLNALYDIIGEGNYVDLVISDMAPNTSGIKSVDQARSMHLVELAADFAQERLVAGGDFLCKVFHGAGFDALFQHLKTQFSTVLTRKPQASRARSQETYLLARGFIRSAE</sequence>
<dbReference type="EC" id="2.1.1.166" evidence="1"/>
<dbReference type="EMBL" id="CP000513">
    <property type="protein sequence ID" value="ABQ13661.1"/>
    <property type="molecule type" value="Genomic_DNA"/>
</dbReference>
<dbReference type="RefSeq" id="WP_012031534.1">
    <property type="nucleotide sequence ID" value="NC_009446.1"/>
</dbReference>
<dbReference type="SMR" id="A5EXB6"/>
<dbReference type="STRING" id="246195.DNO_1239"/>
<dbReference type="KEGG" id="dno:DNO_1239"/>
<dbReference type="eggNOG" id="COG0293">
    <property type="taxonomic scope" value="Bacteria"/>
</dbReference>
<dbReference type="HOGENOM" id="CLU_009422_4_0_6"/>
<dbReference type="OrthoDB" id="9790080at2"/>
<dbReference type="Proteomes" id="UP000000248">
    <property type="component" value="Chromosome"/>
</dbReference>
<dbReference type="GO" id="GO:0005737">
    <property type="term" value="C:cytoplasm"/>
    <property type="evidence" value="ECO:0007669"/>
    <property type="project" value="UniProtKB-SubCell"/>
</dbReference>
<dbReference type="GO" id="GO:0008650">
    <property type="term" value="F:rRNA (uridine-2'-O-)-methyltransferase activity"/>
    <property type="evidence" value="ECO:0007669"/>
    <property type="project" value="UniProtKB-UniRule"/>
</dbReference>
<dbReference type="FunFam" id="3.40.50.150:FF:000005">
    <property type="entry name" value="Ribosomal RNA large subunit methyltransferase E"/>
    <property type="match status" value="1"/>
</dbReference>
<dbReference type="Gene3D" id="3.40.50.150">
    <property type="entry name" value="Vaccinia Virus protein VP39"/>
    <property type="match status" value="1"/>
</dbReference>
<dbReference type="HAMAP" id="MF_01547">
    <property type="entry name" value="RNA_methyltr_E"/>
    <property type="match status" value="1"/>
</dbReference>
<dbReference type="InterPro" id="IPR050082">
    <property type="entry name" value="RNA_methyltr_RlmE"/>
</dbReference>
<dbReference type="InterPro" id="IPR002877">
    <property type="entry name" value="RNA_MeTrfase_FtsJ_dom"/>
</dbReference>
<dbReference type="InterPro" id="IPR015507">
    <property type="entry name" value="rRNA-MeTfrase_E"/>
</dbReference>
<dbReference type="InterPro" id="IPR029063">
    <property type="entry name" value="SAM-dependent_MTases_sf"/>
</dbReference>
<dbReference type="NCBIfam" id="NF008390">
    <property type="entry name" value="PRK11188.1"/>
    <property type="match status" value="1"/>
</dbReference>
<dbReference type="PANTHER" id="PTHR10920">
    <property type="entry name" value="RIBOSOMAL RNA METHYLTRANSFERASE"/>
    <property type="match status" value="1"/>
</dbReference>
<dbReference type="PANTHER" id="PTHR10920:SF18">
    <property type="entry name" value="RRNA METHYLTRANSFERASE 2, MITOCHONDRIAL"/>
    <property type="match status" value="1"/>
</dbReference>
<dbReference type="Pfam" id="PF01728">
    <property type="entry name" value="FtsJ"/>
    <property type="match status" value="1"/>
</dbReference>
<dbReference type="PIRSF" id="PIRSF005461">
    <property type="entry name" value="23S_rRNA_mtase"/>
    <property type="match status" value="1"/>
</dbReference>
<dbReference type="SUPFAM" id="SSF53335">
    <property type="entry name" value="S-adenosyl-L-methionine-dependent methyltransferases"/>
    <property type="match status" value="1"/>
</dbReference>
<protein>
    <recommendedName>
        <fullName evidence="1">Ribosomal RNA large subunit methyltransferase E</fullName>
        <ecNumber evidence="1">2.1.1.166</ecNumber>
    </recommendedName>
    <alternativeName>
        <fullName evidence="1">23S rRNA Um2552 methyltransferase</fullName>
    </alternativeName>
    <alternativeName>
        <fullName evidence="1">rRNA (uridine-2'-O-)-methyltransferase</fullName>
    </alternativeName>
</protein>
<reference key="1">
    <citation type="journal article" date="2007" name="Nat. Biotechnol.">
        <title>Genome sequence and identification of candidate vaccine antigens from the animal pathogen Dichelobacter nodosus.</title>
        <authorList>
            <person name="Myers G.S.A."/>
            <person name="Parker D."/>
            <person name="Al-Hasani K."/>
            <person name="Kennan R.M."/>
            <person name="Seemann T."/>
            <person name="Ren Q."/>
            <person name="Badger J.H."/>
            <person name="Selengut J.D."/>
            <person name="Deboy R.T."/>
            <person name="Tettelin H."/>
            <person name="Boyce J.D."/>
            <person name="McCarl V.P."/>
            <person name="Han X."/>
            <person name="Nelson W.C."/>
            <person name="Madupu R."/>
            <person name="Mohamoud Y."/>
            <person name="Holley T."/>
            <person name="Fedorova N."/>
            <person name="Khouri H."/>
            <person name="Bottomley S.P."/>
            <person name="Whittington R.J."/>
            <person name="Adler B."/>
            <person name="Songer J.G."/>
            <person name="Rood J.I."/>
            <person name="Paulsen I.T."/>
        </authorList>
    </citation>
    <scope>NUCLEOTIDE SEQUENCE [LARGE SCALE GENOMIC DNA]</scope>
    <source>
        <strain>VCS1703A</strain>
    </source>
</reference>
<accession>A5EXB6</accession>
<gene>
    <name evidence="1" type="primary">rlmE</name>
    <name evidence="1" type="synonym">ftsJ</name>
    <name evidence="1" type="synonym">rrmJ</name>
    <name type="ordered locus">DNO_1239</name>
</gene>
<name>RLME_DICNV</name>
<organism>
    <name type="scientific">Dichelobacter nodosus (strain VCS1703A)</name>
    <dbReference type="NCBI Taxonomy" id="246195"/>
    <lineage>
        <taxon>Bacteria</taxon>
        <taxon>Pseudomonadati</taxon>
        <taxon>Pseudomonadota</taxon>
        <taxon>Gammaproteobacteria</taxon>
        <taxon>Cardiobacteriales</taxon>
        <taxon>Cardiobacteriaceae</taxon>
        <taxon>Dichelobacter</taxon>
    </lineage>
</organism>
<comment type="function">
    <text evidence="1">Specifically methylates the uridine in position 2552 of 23S rRNA at the 2'-O position of the ribose in the fully assembled 50S ribosomal subunit.</text>
</comment>
<comment type="catalytic activity">
    <reaction evidence="1">
        <text>uridine(2552) in 23S rRNA + S-adenosyl-L-methionine = 2'-O-methyluridine(2552) in 23S rRNA + S-adenosyl-L-homocysteine + H(+)</text>
        <dbReference type="Rhea" id="RHEA:42720"/>
        <dbReference type="Rhea" id="RHEA-COMP:10202"/>
        <dbReference type="Rhea" id="RHEA-COMP:10203"/>
        <dbReference type="ChEBI" id="CHEBI:15378"/>
        <dbReference type="ChEBI" id="CHEBI:57856"/>
        <dbReference type="ChEBI" id="CHEBI:59789"/>
        <dbReference type="ChEBI" id="CHEBI:65315"/>
        <dbReference type="ChEBI" id="CHEBI:74478"/>
        <dbReference type="EC" id="2.1.1.166"/>
    </reaction>
</comment>
<comment type="subcellular location">
    <subcellularLocation>
        <location evidence="1">Cytoplasm</location>
    </subcellularLocation>
</comment>
<comment type="similarity">
    <text evidence="1">Belongs to the class I-like SAM-binding methyltransferase superfamily. RNA methyltransferase RlmE family.</text>
</comment>
<keyword id="KW-0963">Cytoplasm</keyword>
<keyword id="KW-0489">Methyltransferase</keyword>
<keyword id="KW-1185">Reference proteome</keyword>
<keyword id="KW-0698">rRNA processing</keyword>
<keyword id="KW-0949">S-adenosyl-L-methionine</keyword>
<keyword id="KW-0808">Transferase</keyword>
<evidence type="ECO:0000255" key="1">
    <source>
        <dbReference type="HAMAP-Rule" id="MF_01547"/>
    </source>
</evidence>
<proteinExistence type="inferred from homology"/>